<dbReference type="EMBL" id="CR860709">
    <property type="protein sequence ID" value="CAH92824.1"/>
    <property type="molecule type" value="mRNA"/>
</dbReference>
<dbReference type="RefSeq" id="NP_001127592.1">
    <property type="nucleotide sequence ID" value="NM_001134120.1"/>
</dbReference>
<dbReference type="RefSeq" id="XP_009233542.1">
    <property type="nucleotide sequence ID" value="XM_009235267.4"/>
</dbReference>
<dbReference type="RefSeq" id="XP_024096133.1">
    <property type="nucleotide sequence ID" value="XM_024240365.3"/>
</dbReference>
<dbReference type="RefSeq" id="XP_054400084.1">
    <property type="nucleotide sequence ID" value="XM_054544109.2"/>
</dbReference>
<dbReference type="RefSeq" id="XP_063577088.1">
    <property type="nucleotide sequence ID" value="XM_063721018.1"/>
</dbReference>
<dbReference type="SMR" id="Q5R5Z2"/>
<dbReference type="FunCoup" id="Q5R5Z2">
    <property type="interactions" value="2808"/>
</dbReference>
<dbReference type="STRING" id="9601.ENSPPYP00000023210"/>
<dbReference type="GeneID" id="100174671"/>
<dbReference type="KEGG" id="pon:100174671"/>
<dbReference type="CTD" id="84295"/>
<dbReference type="eggNOG" id="KOG1084">
    <property type="taxonomic scope" value="Eukaryota"/>
</dbReference>
<dbReference type="HOGENOM" id="CLU_049182_0_0_1"/>
<dbReference type="InParanoid" id="Q5R5Z2"/>
<dbReference type="OrthoDB" id="2384350at2759"/>
<dbReference type="TreeFam" id="TF325426"/>
<dbReference type="Proteomes" id="UP000001595">
    <property type="component" value="Chromosome X"/>
</dbReference>
<dbReference type="GO" id="GO:0000776">
    <property type="term" value="C:kinetochore"/>
    <property type="evidence" value="ECO:0007669"/>
    <property type="project" value="UniProtKB-KW"/>
</dbReference>
<dbReference type="GO" id="GO:0005730">
    <property type="term" value="C:nucleolus"/>
    <property type="evidence" value="ECO:0007669"/>
    <property type="project" value="UniProtKB-SubCell"/>
</dbReference>
<dbReference type="GO" id="GO:0003677">
    <property type="term" value="F:DNA binding"/>
    <property type="evidence" value="ECO:0007669"/>
    <property type="project" value="UniProtKB-KW"/>
</dbReference>
<dbReference type="GO" id="GO:0042393">
    <property type="term" value="F:histone binding"/>
    <property type="evidence" value="ECO:0007669"/>
    <property type="project" value="TreeGrafter"/>
</dbReference>
<dbReference type="GO" id="GO:0042826">
    <property type="term" value="F:histone deacetylase binding"/>
    <property type="evidence" value="ECO:0007669"/>
    <property type="project" value="TreeGrafter"/>
</dbReference>
<dbReference type="GO" id="GO:0008270">
    <property type="term" value="F:zinc ion binding"/>
    <property type="evidence" value="ECO:0007669"/>
    <property type="project" value="UniProtKB-KW"/>
</dbReference>
<dbReference type="CDD" id="cd15710">
    <property type="entry name" value="ePHD1_PHF6"/>
    <property type="match status" value="1"/>
</dbReference>
<dbReference type="CDD" id="cd15711">
    <property type="entry name" value="ePHD2_PHF6"/>
    <property type="match status" value="1"/>
</dbReference>
<dbReference type="FunFam" id="3.30.40.10:FF:000219">
    <property type="entry name" value="PHD finger protein 6 isoform X1"/>
    <property type="match status" value="1"/>
</dbReference>
<dbReference type="FunFam" id="3.30.40.10:FF:000167">
    <property type="entry name" value="PHD finger protein 6 X-linked"/>
    <property type="match status" value="1"/>
</dbReference>
<dbReference type="Gene3D" id="3.30.40.10">
    <property type="entry name" value="Zinc/RING finger domain, C3HC4 (zinc finger)"/>
    <property type="match status" value="2"/>
</dbReference>
<dbReference type="InterPro" id="IPR034732">
    <property type="entry name" value="EPHD"/>
</dbReference>
<dbReference type="InterPro" id="IPR051188">
    <property type="entry name" value="PHD-type_Zinc_Finger"/>
</dbReference>
<dbReference type="InterPro" id="IPR001965">
    <property type="entry name" value="Znf_PHD"/>
</dbReference>
<dbReference type="InterPro" id="IPR013083">
    <property type="entry name" value="Znf_RING/FYVE/PHD"/>
</dbReference>
<dbReference type="PANTHER" id="PTHR12420">
    <property type="entry name" value="PHD FINGER PROTEIN"/>
    <property type="match status" value="1"/>
</dbReference>
<dbReference type="PANTHER" id="PTHR12420:SF15">
    <property type="entry name" value="PHD FINGER PROTEIN 6"/>
    <property type="match status" value="1"/>
</dbReference>
<dbReference type="Pfam" id="PF13771">
    <property type="entry name" value="zf-HC5HC2H"/>
    <property type="match status" value="2"/>
</dbReference>
<dbReference type="SMART" id="SM00249">
    <property type="entry name" value="PHD"/>
    <property type="match status" value="2"/>
</dbReference>
<dbReference type="PROSITE" id="PS51805">
    <property type="entry name" value="EPHD"/>
    <property type="match status" value="2"/>
</dbReference>
<reference key="1">
    <citation type="submission" date="2004-11" db="EMBL/GenBank/DDBJ databases">
        <authorList>
            <consortium name="The German cDNA consortium"/>
        </authorList>
    </citation>
    <scope>NUCLEOTIDE SEQUENCE [LARGE SCALE MRNA]</scope>
    <source>
        <tissue>Brain cortex</tissue>
    </source>
</reference>
<name>PHF6_PONAB</name>
<proteinExistence type="evidence at transcript level"/>
<protein>
    <recommendedName>
        <fullName>PHD finger protein 6</fullName>
    </recommendedName>
</protein>
<sequence>MSSSVEQKKGPTRQRKCGFCKSNRDKECGQLLISENQKVAAHHKCMLFSSALVSSHSDNESLGGFSIEDVQKEIKRGTKLMCSLCHCPGATIGCDVKTCHRTYHYHCALHDKAQIREKPSQGIYMVYCRKHKKTAHNSEADLEESFNEHELEPSSPKSKKKSRKGRPRKTNFKGLSEDTRSTSSHGTDEMESSSYRDRSPHRSSPSDTRPKCGFCHVGEEENEARGKLHIFNAKKAAAHYKCMLFSSGTVQLTTTSRAEFGDFDIKTVLQEIKRGKRMKCTLCSQPGATIGCEIKACVKTYHYHCGVQDKAKYIENMSRGIYKLYCKNHSGNDERDEEDEERESKSRGKVEIDQQQLTQQQLNGN</sequence>
<gene>
    <name type="primary">PHF6</name>
</gene>
<organism>
    <name type="scientific">Pongo abelii</name>
    <name type="common">Sumatran orangutan</name>
    <name type="synonym">Pongo pygmaeus abelii</name>
    <dbReference type="NCBI Taxonomy" id="9601"/>
    <lineage>
        <taxon>Eukaryota</taxon>
        <taxon>Metazoa</taxon>
        <taxon>Chordata</taxon>
        <taxon>Craniata</taxon>
        <taxon>Vertebrata</taxon>
        <taxon>Euteleostomi</taxon>
        <taxon>Mammalia</taxon>
        <taxon>Eutheria</taxon>
        <taxon>Euarchontoglires</taxon>
        <taxon>Primates</taxon>
        <taxon>Haplorrhini</taxon>
        <taxon>Catarrhini</taxon>
        <taxon>Hominidae</taxon>
        <taxon>Pongo</taxon>
    </lineage>
</organism>
<accession>Q5R5Z2</accession>
<keyword id="KW-0007">Acetylation</keyword>
<keyword id="KW-0137">Centromere</keyword>
<keyword id="KW-0158">Chromosome</keyword>
<keyword id="KW-0238">DNA-binding</keyword>
<keyword id="KW-1017">Isopeptide bond</keyword>
<keyword id="KW-0995">Kinetochore</keyword>
<keyword id="KW-0479">Metal-binding</keyword>
<keyword id="KW-0539">Nucleus</keyword>
<keyword id="KW-0597">Phosphoprotein</keyword>
<keyword id="KW-1185">Reference proteome</keyword>
<keyword id="KW-0677">Repeat</keyword>
<keyword id="KW-0804">Transcription</keyword>
<keyword id="KW-0805">Transcription regulation</keyword>
<keyword id="KW-0832">Ubl conjugation</keyword>
<keyword id="KW-0862">Zinc</keyword>
<keyword id="KW-0863">Zinc-finger</keyword>
<comment type="function">
    <text evidence="1">Transcriptional regulator that associates with ribosomal RNA promoters and suppresses ribosomal RNA (rRNA) transcription.</text>
</comment>
<comment type="subunit">
    <text evidence="1">Interacts with UBTF. Interacts with the NuRD complex component RBBP4 (via the nucleolar localization motif), the interaction mediates transcriptional repression activity (By similarity).</text>
</comment>
<comment type="subcellular location">
    <subcellularLocation>
        <location evidence="1">Nucleus</location>
    </subcellularLocation>
    <subcellularLocation>
        <location evidence="1">Nucleus</location>
        <location evidence="1">Nucleolus</location>
    </subcellularLocation>
    <subcellularLocation>
        <location evidence="2">Chromosome</location>
        <location evidence="2">Centromere</location>
        <location evidence="2">Kinetochore</location>
    </subcellularLocation>
    <text evidence="1">Nuclear, it particularly localizes to the nucleolus.</text>
</comment>
<comment type="domain">
    <text evidence="1">The PHD-type zinc finger 1 mediates both nucleolar localization and interaction with UBTF.</text>
</comment>
<comment type="domain">
    <text evidence="2">The ePHD2 domain folds as an integrated structural module comprizing the C2HC pre-PHD-type 2 zinc finger and the PHD-type 2 zinc finger. It mediates non-specific binding to dsDNA, but doesn't bind histones in contrast to many PHD-type zinc fingers.</text>
</comment>
<evidence type="ECO:0000250" key="1"/>
<evidence type="ECO:0000250" key="2">
    <source>
        <dbReference type="UniProtKB" id="Q8IWS0"/>
    </source>
</evidence>
<evidence type="ECO:0000250" key="3">
    <source>
        <dbReference type="UniProtKB" id="Q9D4J7"/>
    </source>
</evidence>
<evidence type="ECO:0000255" key="4"/>
<evidence type="ECO:0000255" key="5">
    <source>
        <dbReference type="PROSITE-ProRule" id="PRU01146"/>
    </source>
</evidence>
<evidence type="ECO:0000256" key="6">
    <source>
        <dbReference type="SAM" id="MobiDB-lite"/>
    </source>
</evidence>
<feature type="initiator methionine" description="Removed" evidence="2">
    <location>
        <position position="1"/>
    </location>
</feature>
<feature type="chain" id="PRO_0000288799" description="PHD finger protein 6">
    <location>
        <begin position="2"/>
        <end position="365"/>
    </location>
</feature>
<feature type="zinc finger region" description="C2HC pre-PHD-type 1" evidence="5">
    <location>
        <begin position="14"/>
        <end position="52"/>
    </location>
</feature>
<feature type="zinc finger region" description="PHD-type 1" evidence="5">
    <location>
        <begin position="80"/>
        <end position="132"/>
    </location>
</feature>
<feature type="zinc finger region" description="C2HC pre-PHD-type 2" evidence="5">
    <location>
        <begin position="209"/>
        <end position="249"/>
    </location>
</feature>
<feature type="zinc finger region" description="PHD-type 2" evidence="5">
    <location>
        <begin position="278"/>
        <end position="330"/>
    </location>
</feature>
<feature type="region of interest" description="Extended PHD1 domain (ePHD1)" evidence="5">
    <location>
        <begin position="14"/>
        <end position="132"/>
    </location>
</feature>
<feature type="region of interest" description="Disordered" evidence="6">
    <location>
        <begin position="139"/>
        <end position="211"/>
    </location>
</feature>
<feature type="region of interest" description="Extended PHD2 domain (ePHD2)" evidence="5">
    <location>
        <begin position="209"/>
        <end position="330"/>
    </location>
</feature>
<feature type="region of interest" description="Disordered" evidence="6">
    <location>
        <begin position="330"/>
        <end position="365"/>
    </location>
</feature>
<feature type="short sequence motif" description="Nuclear localization signal" evidence="4">
    <location>
        <begin position="13"/>
        <end position="16"/>
    </location>
</feature>
<feature type="short sequence motif" description="Nuclear localization signal" evidence="4">
    <location>
        <begin position="129"/>
        <end position="133"/>
    </location>
</feature>
<feature type="short sequence motif" description="Nucleolar localization signal" evidence="4">
    <location>
        <begin position="157"/>
        <end position="169"/>
    </location>
</feature>
<feature type="compositionally biased region" description="Basic residues" evidence="6">
    <location>
        <begin position="157"/>
        <end position="171"/>
    </location>
</feature>
<feature type="compositionally biased region" description="Basic and acidic residues" evidence="6">
    <location>
        <begin position="342"/>
        <end position="352"/>
    </location>
</feature>
<feature type="compositionally biased region" description="Low complexity" evidence="6">
    <location>
        <begin position="354"/>
        <end position="365"/>
    </location>
</feature>
<feature type="modified residue" description="N-acetylserine" evidence="2">
    <location>
        <position position="2"/>
    </location>
</feature>
<feature type="modified residue" description="Phosphoserine" evidence="2">
    <location>
        <position position="138"/>
    </location>
</feature>
<feature type="modified residue" description="Phosphoserine" evidence="2">
    <location>
        <position position="145"/>
    </location>
</feature>
<feature type="modified residue" description="Phosphoserine" evidence="2">
    <location>
        <position position="155"/>
    </location>
</feature>
<feature type="modified residue" description="Phosphoserine" evidence="3">
    <location>
        <position position="183"/>
    </location>
</feature>
<feature type="modified residue" description="Phosphoserine" evidence="2">
    <location>
        <position position="199"/>
    </location>
</feature>
<feature type="modified residue" description="Phosphothreonine" evidence="2">
    <location>
        <position position="358"/>
    </location>
</feature>
<feature type="cross-link" description="Glycyl lysine isopeptide (Lys-Gly) (interchain with G-Cter in SUMO2)" evidence="2">
    <location>
        <position position="173"/>
    </location>
</feature>
<feature type="cross-link" description="Glycyl lysine isopeptide (Lys-Gly) (interchain with G-Cter in SUMO2)" evidence="2">
    <location>
        <position position="227"/>
    </location>
</feature>